<gene>
    <name type="primary">ccrM</name>
    <name type="ordered locus">Oant_0605</name>
</gene>
<comment type="function">
    <text evidence="1 2 4">A beta subtype methylase that recognizes the double-stranded sequence 5'-GANTC-3' and methylates A-2 on both strands (By similarity) (PubMed:12654995). CcrM-mediated methylation has important cellular functions. Contributes to the accurate cell-cycle control of DNA replication and cellular morphology (By similarity).</text>
</comment>
<comment type="catalytic activity">
    <reaction>
        <text>a 2'-deoxyadenosine in DNA + S-adenosyl-L-methionine = an N(6)-methyl-2'-deoxyadenosine in DNA + S-adenosyl-L-homocysteine + H(+)</text>
        <dbReference type="Rhea" id="RHEA:15197"/>
        <dbReference type="Rhea" id="RHEA-COMP:12418"/>
        <dbReference type="Rhea" id="RHEA-COMP:12419"/>
        <dbReference type="ChEBI" id="CHEBI:15378"/>
        <dbReference type="ChEBI" id="CHEBI:57856"/>
        <dbReference type="ChEBI" id="CHEBI:59789"/>
        <dbReference type="ChEBI" id="CHEBI:90615"/>
        <dbReference type="ChEBI" id="CHEBI:90616"/>
        <dbReference type="EC" id="2.1.1.72"/>
    </reaction>
</comment>
<comment type="similarity">
    <text evidence="5">Belongs to the N(4)/N(6)-methyltransferase family.</text>
</comment>
<accession>A6WWI2</accession>
<keyword id="KW-0235">DNA replication</keyword>
<keyword id="KW-0238">DNA-binding</keyword>
<keyword id="KW-0489">Methyltransferase</keyword>
<keyword id="KW-1185">Reference proteome</keyword>
<keyword id="KW-0949">S-adenosyl-L-methionine</keyword>
<keyword id="KW-0808">Transferase</keyword>
<protein>
    <recommendedName>
        <fullName evidence="2">DNA methyltransferase CcrM</fullName>
        <shortName>M.CcrM</shortName>
        <ecNumber>2.1.1.72</ecNumber>
    </recommendedName>
    <alternativeName>
        <fullName>Adenine-specific methyltransferase BabI</fullName>
    </alternativeName>
    <alternativeName>
        <fullName evidence="4">Type II methyltransferase M.OanORF605P</fullName>
        <shortName evidence="4">M.OanORF605P</shortName>
    </alternativeName>
</protein>
<organism>
    <name type="scientific">Brucella anthropi (strain ATCC 49188 / DSM 6882 / CCUG 24695 / JCM 21032 / LMG 3331 / NBRC 15819 / NCTC 12168 / Alc 37)</name>
    <name type="common">Ochrobactrum anthropi</name>
    <dbReference type="NCBI Taxonomy" id="439375"/>
    <lineage>
        <taxon>Bacteria</taxon>
        <taxon>Pseudomonadati</taxon>
        <taxon>Pseudomonadota</taxon>
        <taxon>Alphaproteobacteria</taxon>
        <taxon>Hyphomicrobiales</taxon>
        <taxon>Brucellaceae</taxon>
        <taxon>Brucella/Ochrobactrum group</taxon>
        <taxon>Brucella</taxon>
    </lineage>
</organism>
<reference key="1">
    <citation type="journal article" date="2011" name="J. Bacteriol.">
        <title>Genome of Ochrobactrum anthropi ATCC 49188 T, a versatile opportunistic pathogen and symbiont of several eukaryotic hosts.</title>
        <authorList>
            <person name="Chain P.S."/>
            <person name="Lang D.M."/>
            <person name="Comerci D.J."/>
            <person name="Malfatti S.A."/>
            <person name="Vergez L.M."/>
            <person name="Shin M."/>
            <person name="Ugalde R.A."/>
            <person name="Garcia E."/>
            <person name="Tolmasky M.E."/>
        </authorList>
    </citation>
    <scope>NUCLEOTIDE SEQUENCE [LARGE SCALE GENOMIC DNA]</scope>
    <source>
        <strain>ATCC 49188 / DSM 6882 / CCUG 24695 / JCM 21032 / LMG 3331 / NBRC 15819 / NCTC 12168 / Alc 37</strain>
    </source>
</reference>
<reference key="2">
    <citation type="journal article" date="2003" name="Nucleic Acids Res.">
        <title>A nomenclature for restriction enzymes, DNA methyltransferases, homing endonucleases and their genes.</title>
        <authorList>
            <person name="Roberts R.J."/>
            <person name="Belfort M."/>
            <person name="Bestor T."/>
            <person name="Bhagwat A.S."/>
            <person name="Bickle T.A."/>
            <person name="Bitinaite J."/>
            <person name="Blumenthal R.M."/>
            <person name="Degtyarev S.K."/>
            <person name="Dryden D.T."/>
            <person name="Dybvig K."/>
            <person name="Firman K."/>
            <person name="Gromova E.S."/>
            <person name="Gumport R.I."/>
            <person name="Halford S.E."/>
            <person name="Hattman S."/>
            <person name="Heitman J."/>
            <person name="Hornby D.P."/>
            <person name="Janulaitis A."/>
            <person name="Jeltsch A."/>
            <person name="Josephsen J."/>
            <person name="Kiss A."/>
            <person name="Klaenhammer T.R."/>
            <person name="Kobayashi I."/>
            <person name="Kong H."/>
            <person name="Krueger D.H."/>
            <person name="Lacks S."/>
            <person name="Marinus M.G."/>
            <person name="Miyahara M."/>
            <person name="Morgan R.D."/>
            <person name="Murray N.E."/>
            <person name="Nagaraja V."/>
            <person name="Piekarowicz A."/>
            <person name="Pingoud A."/>
            <person name="Raleigh E."/>
            <person name="Rao D.N."/>
            <person name="Reich N."/>
            <person name="Repin V.E."/>
            <person name="Selker E.U."/>
            <person name="Shaw P.C."/>
            <person name="Stein D.C."/>
            <person name="Stoddard B.L."/>
            <person name="Szybalski W."/>
            <person name="Trautner T.A."/>
            <person name="Van Etten J.L."/>
            <person name="Vitor J.M."/>
            <person name="Wilson G.G."/>
            <person name="Xu S.Y."/>
        </authorList>
    </citation>
    <scope>NOMENCLATURE</scope>
    <scope>SUBTYPE</scope>
</reference>
<evidence type="ECO:0000250" key="1">
    <source>
        <dbReference type="UniProtKB" id="O30569"/>
    </source>
</evidence>
<evidence type="ECO:0000250" key="2">
    <source>
        <dbReference type="UniProtKB" id="Q2YMK2"/>
    </source>
</evidence>
<evidence type="ECO:0000255" key="3"/>
<evidence type="ECO:0000303" key="4">
    <source>
    </source>
</evidence>
<evidence type="ECO:0000305" key="5"/>
<name>CCRM_BRUA4</name>
<sequence>MSLVRLAHELPIEAPRTAWLDSIIKGDCVAALERLPDHSVDVIFADPPYNLQLGGDLHRPDQSMVSAVDDHWDQFESFQAYDAFTRAWLMACRRVLKPNGTIWVIGSYHNIFRVGSQLQDLGFWLLNDVIWRKTNPMPNFRGRRFQNAHETLIWASRDQKGKGYTFNYEAMKAANDDVQMRSDWLFPICTGSERLKDENGDKVHPTQKPEALLARIMMASSKPGDVILDPFFGSGTTGAVAKRLGRHFVGIEREQSYIDAATARIDAVEPLGKAELTVMTGKRAEPRVAFTSVLEAGLLRPGTVLCDERRRFAAIVRADGTLAANGEAGSIHRIGAKVQGFDACNGWTFWHYEENGALKPIDALRKVIRDQMAVAGA</sequence>
<dbReference type="EC" id="2.1.1.72"/>
<dbReference type="EMBL" id="CP000758">
    <property type="protein sequence ID" value="ABS13336.1"/>
    <property type="molecule type" value="Genomic_DNA"/>
</dbReference>
<dbReference type="RefSeq" id="WP_012090866.1">
    <property type="nucleotide sequence ID" value="NC_009667.1"/>
</dbReference>
<dbReference type="SMR" id="A6WWI2"/>
<dbReference type="STRING" id="439375.Oant_0605"/>
<dbReference type="REBASE" id="15992">
    <property type="entry name" value="M.OanORF605P"/>
</dbReference>
<dbReference type="KEGG" id="oan:Oant_0605"/>
<dbReference type="eggNOG" id="COG2189">
    <property type="taxonomic scope" value="Bacteria"/>
</dbReference>
<dbReference type="HOGENOM" id="CLU_024927_5_1_5"/>
<dbReference type="Proteomes" id="UP000002301">
    <property type="component" value="Chromosome 1"/>
</dbReference>
<dbReference type="GO" id="GO:0005737">
    <property type="term" value="C:cytoplasm"/>
    <property type="evidence" value="ECO:0007669"/>
    <property type="project" value="TreeGrafter"/>
</dbReference>
<dbReference type="GO" id="GO:0003677">
    <property type="term" value="F:DNA binding"/>
    <property type="evidence" value="ECO:0007669"/>
    <property type="project" value="UniProtKB-KW"/>
</dbReference>
<dbReference type="GO" id="GO:0008170">
    <property type="term" value="F:N-methyltransferase activity"/>
    <property type="evidence" value="ECO:0007669"/>
    <property type="project" value="InterPro"/>
</dbReference>
<dbReference type="GO" id="GO:0009007">
    <property type="term" value="F:site-specific DNA-methyltransferase (adenine-specific) activity"/>
    <property type="evidence" value="ECO:0007669"/>
    <property type="project" value="UniProtKB-EC"/>
</dbReference>
<dbReference type="GO" id="GO:0006260">
    <property type="term" value="P:DNA replication"/>
    <property type="evidence" value="ECO:0007669"/>
    <property type="project" value="UniProtKB-KW"/>
</dbReference>
<dbReference type="GO" id="GO:0032259">
    <property type="term" value="P:methylation"/>
    <property type="evidence" value="ECO:0007669"/>
    <property type="project" value="UniProtKB-KW"/>
</dbReference>
<dbReference type="FunFam" id="3.40.50.150:FF:000276">
    <property type="entry name" value="Methyltransferase"/>
    <property type="match status" value="1"/>
</dbReference>
<dbReference type="Gene3D" id="3.40.50.150">
    <property type="entry name" value="Vaccinia Virus protein VP39"/>
    <property type="match status" value="1"/>
</dbReference>
<dbReference type="InterPro" id="IPR002941">
    <property type="entry name" value="DNA_methylase_N4/N6"/>
</dbReference>
<dbReference type="InterPro" id="IPR002052">
    <property type="entry name" value="DNA_methylase_N6_adenine_CS"/>
</dbReference>
<dbReference type="InterPro" id="IPR040843">
    <property type="entry name" value="RAMA"/>
</dbReference>
<dbReference type="InterPro" id="IPR001091">
    <property type="entry name" value="RM_Methyltransferase"/>
</dbReference>
<dbReference type="InterPro" id="IPR029063">
    <property type="entry name" value="SAM-dependent_MTases_sf"/>
</dbReference>
<dbReference type="PANTHER" id="PTHR13370">
    <property type="entry name" value="RNA METHYLASE-RELATED"/>
    <property type="match status" value="1"/>
</dbReference>
<dbReference type="PANTHER" id="PTHR13370:SF3">
    <property type="entry name" value="TRNA (GUANINE(10)-N2)-METHYLTRANSFERASE HOMOLOG"/>
    <property type="match status" value="1"/>
</dbReference>
<dbReference type="Pfam" id="PF01555">
    <property type="entry name" value="N6_N4_Mtase"/>
    <property type="match status" value="1"/>
</dbReference>
<dbReference type="Pfam" id="PF18755">
    <property type="entry name" value="RAMA"/>
    <property type="match status" value="1"/>
</dbReference>
<dbReference type="PRINTS" id="PR00508">
    <property type="entry name" value="S21N4MTFRASE"/>
</dbReference>
<dbReference type="SUPFAM" id="SSF53335">
    <property type="entry name" value="S-adenosyl-L-methionine-dependent methyltransferases"/>
    <property type="match status" value="1"/>
</dbReference>
<dbReference type="PROSITE" id="PS00092">
    <property type="entry name" value="N6_MTASE"/>
    <property type="match status" value="1"/>
</dbReference>
<proteinExistence type="inferred from homology"/>
<feature type="chain" id="PRO_0000363194" description="DNA methyltransferase CcrM">
    <location>
        <begin position="1"/>
        <end position="377"/>
    </location>
</feature>
<feature type="domain" description="RAMA" evidence="3">
    <location>
        <begin position="271"/>
        <end position="373"/>
    </location>
</feature>